<evidence type="ECO:0000250" key="1"/>
<evidence type="ECO:0000255" key="2"/>
<evidence type="ECO:0000256" key="3">
    <source>
        <dbReference type="SAM" id="MobiDB-lite"/>
    </source>
</evidence>
<evidence type="ECO:0000305" key="4"/>
<comment type="function">
    <text evidence="1">Multifunctional protein that is required for efficient pedestal formation in host epithelial cells during infection. The extracellular region acts as a receptor for bacterial intimin, allowing the bacterium to attach tightly to the host-cell surface. Simultaneously, the intracellular region initiates a signaling cascade in the host cell, which leads to actin polymerization and formation of actin pedestals at the sites of bacterial adhesion (By similarity).</text>
</comment>
<comment type="subunit">
    <text evidence="1">Interacts with intimin and host proteins.</text>
</comment>
<comment type="subcellular location">
    <subcellularLocation>
        <location evidence="1">Secreted</location>
    </subcellularLocation>
    <subcellularLocation>
        <location evidence="1">Host cell membrane</location>
        <topology evidence="1">Multi-pass membrane protein</topology>
    </subcellularLocation>
    <text evidence="1">Secreted via the type III secretion system (T3SS). Released into the host cytoplasm via T3SS and then independently inserts into the plasma membrane from a cytoplasmic location. In host cells, localizes to the tip of the actin pedestal (By similarity).</text>
</comment>
<comment type="PTM">
    <text evidence="1">Phosphorylated by host kinases.</text>
</comment>
<comment type="similarity">
    <text evidence="4">Belongs to the Tir receptor family.</text>
</comment>
<protein>
    <recommendedName>
        <fullName>Translocated intimin receptor Tir</fullName>
    </recommendedName>
    <alternativeName>
        <fullName>Secreted effector protein Tir</fullName>
    </alternativeName>
</protein>
<name>TIR_ECO5E</name>
<accession>B5YWI0</accession>
<proteinExistence type="inferred from homology"/>
<feature type="chain" id="PRO_0000414056" description="Translocated intimin receptor Tir">
    <location>
        <begin position="1"/>
        <end position="558"/>
    </location>
</feature>
<feature type="topological domain" description="Cytoplasmic" evidence="2">
    <location>
        <begin position="1"/>
        <end position="230"/>
    </location>
</feature>
<feature type="transmembrane region" description="Helical" evidence="2">
    <location>
        <begin position="231"/>
        <end position="251"/>
    </location>
</feature>
<feature type="topological domain" description="Extracellular" evidence="2">
    <location>
        <begin position="252"/>
        <end position="362"/>
    </location>
</feature>
<feature type="transmembrane region" description="Helical" evidence="2">
    <location>
        <begin position="363"/>
        <end position="383"/>
    </location>
</feature>
<feature type="topological domain" description="Cytoplasmic" evidence="2">
    <location>
        <begin position="384"/>
        <end position="558"/>
    </location>
</feature>
<feature type="region of interest" description="Disordered" evidence="3">
    <location>
        <begin position="1"/>
        <end position="44"/>
    </location>
</feature>
<feature type="region of interest" description="Disordered" evidence="3">
    <location>
        <begin position="182"/>
        <end position="226"/>
    </location>
</feature>
<feature type="region of interest" description="Disordered" evidence="3">
    <location>
        <begin position="257"/>
        <end position="280"/>
    </location>
</feature>
<feature type="region of interest" description="Disordered" evidence="3">
    <location>
        <begin position="388"/>
        <end position="451"/>
    </location>
</feature>
<feature type="region of interest" description="Disordered" evidence="3">
    <location>
        <begin position="533"/>
        <end position="558"/>
    </location>
</feature>
<feature type="short sequence motif" description="Essential for actin pedestal formation" evidence="1">
    <location>
        <begin position="456"/>
        <end position="458"/>
    </location>
</feature>
<feature type="compositionally biased region" description="Basic and acidic residues" evidence="3">
    <location>
        <begin position="182"/>
        <end position="205"/>
    </location>
</feature>
<feature type="compositionally biased region" description="Low complexity" evidence="3">
    <location>
        <begin position="213"/>
        <end position="224"/>
    </location>
</feature>
<feature type="compositionally biased region" description="Low complexity" evidence="3">
    <location>
        <begin position="257"/>
        <end position="277"/>
    </location>
</feature>
<feature type="compositionally biased region" description="Low complexity" evidence="3">
    <location>
        <begin position="393"/>
        <end position="403"/>
    </location>
</feature>
<feature type="compositionally biased region" description="Polar residues" evidence="3">
    <location>
        <begin position="404"/>
        <end position="424"/>
    </location>
</feature>
<feature type="compositionally biased region" description="Low complexity" evidence="3">
    <location>
        <begin position="436"/>
        <end position="450"/>
    </location>
</feature>
<feature type="compositionally biased region" description="Polar residues" evidence="3">
    <location>
        <begin position="538"/>
        <end position="548"/>
    </location>
</feature>
<reference key="1">
    <citation type="journal article" date="2011" name="Proc. Natl. Acad. Sci. U.S.A.">
        <title>Genomic anatomy of Escherichia coli O157:H7 outbreaks.</title>
        <authorList>
            <person name="Eppinger M."/>
            <person name="Mammel M.K."/>
            <person name="Leclerc J.E."/>
            <person name="Ravel J."/>
            <person name="Cebula T.A."/>
        </authorList>
    </citation>
    <scope>NUCLEOTIDE SEQUENCE [LARGE SCALE GENOMIC DNA]</scope>
    <source>
        <strain>EC4115 / EHEC</strain>
    </source>
</reference>
<dbReference type="EMBL" id="CP001164">
    <property type="protein sequence ID" value="ACI36828.1"/>
    <property type="molecule type" value="Genomic_DNA"/>
</dbReference>
<dbReference type="RefSeq" id="WP_001301454.1">
    <property type="nucleotide sequence ID" value="NC_011353.1"/>
</dbReference>
<dbReference type="SMR" id="B5YWI0"/>
<dbReference type="KEGG" id="ecf:ECH74115_5056"/>
<dbReference type="HOGENOM" id="CLU_497576_0_0_6"/>
<dbReference type="GO" id="GO:0005576">
    <property type="term" value="C:extracellular region"/>
    <property type="evidence" value="ECO:0007669"/>
    <property type="project" value="UniProtKB-SubCell"/>
</dbReference>
<dbReference type="GO" id="GO:0020002">
    <property type="term" value="C:host cell plasma membrane"/>
    <property type="evidence" value="ECO:0007669"/>
    <property type="project" value="UniProtKB-SubCell"/>
</dbReference>
<dbReference type="GO" id="GO:0016020">
    <property type="term" value="C:membrane"/>
    <property type="evidence" value="ECO:0007669"/>
    <property type="project" value="UniProtKB-KW"/>
</dbReference>
<dbReference type="Gene3D" id="4.10.820.10">
    <property type="entry name" value="Translocated intimin receptor, central domain"/>
    <property type="match status" value="1"/>
</dbReference>
<dbReference type="InterPro" id="IPR037003">
    <property type="entry name" value="Tir_central_sf"/>
</dbReference>
<dbReference type="InterPro" id="IPR022638">
    <property type="entry name" value="Transloc_intimin_rcpt"/>
</dbReference>
<dbReference type="InterPro" id="IPR022639">
    <property type="entry name" value="Transloc_intimin_rcpt_C"/>
</dbReference>
<dbReference type="InterPro" id="IPR003536">
    <property type="entry name" value="Transloc_intimin_rcpt_cen_dom"/>
</dbReference>
<dbReference type="InterPro" id="IPR022633">
    <property type="entry name" value="Transloc_intimin_rcpt_N"/>
</dbReference>
<dbReference type="NCBIfam" id="NF033637">
    <property type="entry name" value="transloc_TIR"/>
    <property type="match status" value="1"/>
</dbReference>
<dbReference type="Pfam" id="PF07489">
    <property type="entry name" value="Tir_receptor_C"/>
    <property type="match status" value="1"/>
</dbReference>
<dbReference type="Pfam" id="PF03549">
    <property type="entry name" value="Tir_receptor_M"/>
    <property type="match status" value="1"/>
</dbReference>
<dbReference type="Pfam" id="PF07490">
    <property type="entry name" value="Tir_receptor_N"/>
    <property type="match status" value="1"/>
</dbReference>
<dbReference type="PRINTS" id="PR01370">
    <property type="entry name" value="TRNSINTIMINR"/>
</dbReference>
<sequence>MPIGNLGHNPNVNNSIPPAPPLPSQTDGAGGRGQLINSTGPLGSRALFTPVRNSMADSGDNRASDVPGLPVNPMRLAASEITLNDGFEVLHDHGPLDTLNRQIGSSVFRVETQEDGKHIAVGQRNGVETSVVLSDQEYARLQSIDPEGKDKFVFTGGRGGAGHAMVTVASDITEARQRILELLEPKGTGESKGAGESKGVGELRESNSGAENTTETQTSTSTSSLRSDPKLWLALGTVATGLIGLAATGIVQALALTPEPDSPTTTDPDAAASATETATRDQLTKEAFQNPDNQKVNIDELGNAIPSGVLKDDVVANIEEQAKAAGEEAKQQAIENNAQAQKKYDEQQAKRQEELKVSSGAGYGLSGALILGGGIGVAVTAALHRKNQPVEQTTTTTTTTTTTSARTVENKPANNTPAQGNVDTPGSEDTMESRRSSMASTSSTFFDTSSIGTVQNPYADVKTSLHDSQVPTSNSNTSVQNMGNTDSVVYSTIQHPPRDTTDNGARLLGNPSAGIQSTYARLALSGGLRHDMGGLTGGSNSAVNTSNNPPAPGSHRFV</sequence>
<keyword id="KW-1032">Host cell membrane</keyword>
<keyword id="KW-1043">Host membrane</keyword>
<keyword id="KW-0472">Membrane</keyword>
<keyword id="KW-0597">Phosphoprotein</keyword>
<keyword id="KW-0675">Receptor</keyword>
<keyword id="KW-0964">Secreted</keyword>
<keyword id="KW-0812">Transmembrane</keyword>
<keyword id="KW-1133">Transmembrane helix</keyword>
<keyword id="KW-0843">Virulence</keyword>
<organism>
    <name type="scientific">Escherichia coli O157:H7 (strain EC4115 / EHEC)</name>
    <dbReference type="NCBI Taxonomy" id="444450"/>
    <lineage>
        <taxon>Bacteria</taxon>
        <taxon>Pseudomonadati</taxon>
        <taxon>Pseudomonadota</taxon>
        <taxon>Gammaproteobacteria</taxon>
        <taxon>Enterobacterales</taxon>
        <taxon>Enterobacteriaceae</taxon>
        <taxon>Escherichia</taxon>
    </lineage>
</organism>
<gene>
    <name type="primary">tir</name>
    <name type="synonym">espE</name>
    <name type="ordered locus">ECH74115_5056</name>
</gene>